<organism>
    <name type="scientific">Macaca fascicularis</name>
    <name type="common">Crab-eating macaque</name>
    <name type="synonym">Cynomolgus monkey</name>
    <dbReference type="NCBI Taxonomy" id="9541"/>
    <lineage>
        <taxon>Eukaryota</taxon>
        <taxon>Metazoa</taxon>
        <taxon>Chordata</taxon>
        <taxon>Craniata</taxon>
        <taxon>Vertebrata</taxon>
        <taxon>Euteleostomi</taxon>
        <taxon>Mammalia</taxon>
        <taxon>Eutheria</taxon>
        <taxon>Euarchontoglires</taxon>
        <taxon>Primates</taxon>
        <taxon>Haplorrhini</taxon>
        <taxon>Catarrhini</taxon>
        <taxon>Cercopithecidae</taxon>
        <taxon>Cercopithecinae</taxon>
        <taxon>Macaca</taxon>
    </lineage>
</organism>
<gene>
    <name type="primary">EDC3</name>
    <name type="synonym">YJDC</name>
    <name type="ORF">QtsA-11336</name>
</gene>
<sequence>MAADWLGSIVSINCGDSLGVYQGRVSAVDQVSQTISLTRPFHNGVKCLVPEVTFRAGDITELKILEIPGPGGNQHFGDVHQTELGPSGVGCQVGISQNGTGKLVKKPTSSSSAPQNIPKRTDVKSQDVAVSPQQQQCSKSYVDRHMESLSQSKSFRRRHNSWSSSSRHPNQATPKKSGLKNGQMKNKDDECFGDDIEEIPDTDFDFEGNLALFDKAAVFEEIGTYERRSGTRSRGIPNERPTRYRHDENILESEPIVYRRITVPHNVSKEFCTDSGLVVPSVSYEQHKKLLSVAEKHGLTLERRLEMTGVCASQMALTLLGGPNRLNPKNVHQRPTVALLCGPHVKGAQGISCGRHLANHDVQVILFLPNFVKMLESITNELSLFSKTQGQQVSSLKDLPTSPVDLVINCLDCPENVFLRDQPWYKAAVAWANQNRAPVLSIDPPVHEVEQGIDAKWSLALGLPLPLGEHAGRIYLCDIGIPQQVFQEVGINYHSPFGCKFVIPLHSA</sequence>
<keyword id="KW-0963">Cytoplasm</keyword>
<keyword id="KW-0597">Phosphoprotein</keyword>
<keyword id="KW-1185">Reference proteome</keyword>
<keyword id="KW-0694">RNA-binding</keyword>
<protein>
    <recommendedName>
        <fullName>Enhancer of mRNA-decapping protein 3</fullName>
    </recommendedName>
    <alternativeName>
        <fullName>YjeF domain-containing protein 1</fullName>
    </alternativeName>
</protein>
<feature type="chain" id="PRO_0000119055" description="Enhancer of mRNA-decapping protein 3">
    <location>
        <begin position="1"/>
        <end position="508"/>
    </location>
</feature>
<feature type="domain" description="Sm" evidence="5">
    <location>
        <begin position="1"/>
        <end position="68"/>
    </location>
</feature>
<feature type="domain" description="DFDF" evidence="4">
    <location>
        <begin position="192"/>
        <end position="228"/>
    </location>
</feature>
<feature type="domain" description="YjeF N-terminal" evidence="3">
    <location>
        <begin position="283"/>
        <end position="487"/>
    </location>
</feature>
<feature type="region of interest" description="Required for P-body targeting and interaction with DCP1A" evidence="1">
    <location>
        <begin position="1"/>
        <end position="79"/>
    </location>
</feature>
<feature type="region of interest" description="Disordered" evidence="6">
    <location>
        <begin position="95"/>
        <end position="192"/>
    </location>
</feature>
<feature type="region of interest" description="Required for interaction with DDX6" evidence="1">
    <location>
        <begin position="191"/>
        <end position="296"/>
    </location>
</feature>
<feature type="modified residue" description="Phosphoserine" evidence="2">
    <location>
        <position position="131"/>
    </location>
</feature>
<feature type="modified residue" description="Phosphoserine" evidence="2">
    <location>
        <position position="138"/>
    </location>
</feature>
<feature type="modified residue" description="Phosphoserine" evidence="2">
    <location>
        <position position="140"/>
    </location>
</feature>
<feature type="modified residue" description="Phosphoserine" evidence="2">
    <location>
        <position position="161"/>
    </location>
</feature>
<name>EDC3_MACFA</name>
<accession>Q4R8V9</accession>
<evidence type="ECO:0000250" key="1"/>
<evidence type="ECO:0000250" key="2">
    <source>
        <dbReference type="UniProtKB" id="Q96F86"/>
    </source>
</evidence>
<evidence type="ECO:0000255" key="3">
    <source>
        <dbReference type="PROSITE-ProRule" id="PRU00719"/>
    </source>
</evidence>
<evidence type="ECO:0000255" key="4">
    <source>
        <dbReference type="PROSITE-ProRule" id="PRU00845"/>
    </source>
</evidence>
<evidence type="ECO:0000255" key="5">
    <source>
        <dbReference type="PROSITE-ProRule" id="PRU01346"/>
    </source>
</evidence>
<evidence type="ECO:0000256" key="6">
    <source>
        <dbReference type="SAM" id="MobiDB-lite"/>
    </source>
</evidence>
<evidence type="ECO:0000305" key="7"/>
<dbReference type="EMBL" id="AB168338">
    <property type="protein sequence ID" value="BAE00462.1"/>
    <property type="molecule type" value="mRNA"/>
</dbReference>
<dbReference type="RefSeq" id="NP_001272174.1">
    <property type="nucleotide sequence ID" value="NM_001285245.1"/>
</dbReference>
<dbReference type="SMR" id="Q4R8V9"/>
<dbReference type="STRING" id="9541.ENSMFAP00000022779"/>
<dbReference type="eggNOG" id="KOG2585">
    <property type="taxonomic scope" value="Eukaryota"/>
</dbReference>
<dbReference type="Proteomes" id="UP000233100">
    <property type="component" value="Unplaced"/>
</dbReference>
<dbReference type="GO" id="GO:0000932">
    <property type="term" value="C:P-body"/>
    <property type="evidence" value="ECO:0007669"/>
    <property type="project" value="UniProtKB-SubCell"/>
</dbReference>
<dbReference type="GO" id="GO:0003729">
    <property type="term" value="F:mRNA binding"/>
    <property type="evidence" value="ECO:0007669"/>
    <property type="project" value="InterPro"/>
</dbReference>
<dbReference type="GO" id="GO:0031087">
    <property type="term" value="P:deadenylation-independent decapping of nuclear-transcribed mRNA"/>
    <property type="evidence" value="ECO:0007669"/>
    <property type="project" value="InterPro"/>
</dbReference>
<dbReference type="GO" id="GO:0033962">
    <property type="term" value="P:P-body assembly"/>
    <property type="evidence" value="ECO:0007669"/>
    <property type="project" value="TreeGrafter"/>
</dbReference>
<dbReference type="CDD" id="cd01737">
    <property type="entry name" value="LSm16_N"/>
    <property type="match status" value="1"/>
</dbReference>
<dbReference type="FunFam" id="2.30.30.100:FF:000026">
    <property type="entry name" value="Enhancer of mRNA-decapping protein 3"/>
    <property type="match status" value="1"/>
</dbReference>
<dbReference type="FunFam" id="3.40.50.10260:FF:000001">
    <property type="entry name" value="Enhancer of mRNA-decapping protein 3"/>
    <property type="match status" value="1"/>
</dbReference>
<dbReference type="Gene3D" id="2.30.30.100">
    <property type="match status" value="1"/>
</dbReference>
<dbReference type="Gene3D" id="3.40.50.10260">
    <property type="entry name" value="YjeF N-terminal domain"/>
    <property type="match status" value="1"/>
</dbReference>
<dbReference type="InterPro" id="IPR025762">
    <property type="entry name" value="DFDF"/>
</dbReference>
<dbReference type="InterPro" id="IPR019050">
    <property type="entry name" value="FDF_dom"/>
</dbReference>
<dbReference type="InterPro" id="IPR025609">
    <property type="entry name" value="Lsm14-like_N"/>
</dbReference>
<dbReference type="InterPro" id="IPR034107">
    <property type="entry name" value="Lsm16_N"/>
</dbReference>
<dbReference type="InterPro" id="IPR047575">
    <property type="entry name" value="Sm"/>
</dbReference>
<dbReference type="InterPro" id="IPR004443">
    <property type="entry name" value="YjeF_N_dom"/>
</dbReference>
<dbReference type="InterPro" id="IPR036652">
    <property type="entry name" value="YjeF_N_dom_sf"/>
</dbReference>
<dbReference type="PANTHER" id="PTHR13612">
    <property type="entry name" value="ENHANCER OF MRNA-DECAPPING PROTEIN 3"/>
    <property type="match status" value="1"/>
</dbReference>
<dbReference type="PANTHER" id="PTHR13612:SF0">
    <property type="entry name" value="ENHANCER OF MRNA-DECAPPING PROTEIN 3"/>
    <property type="match status" value="1"/>
</dbReference>
<dbReference type="Pfam" id="PF16598">
    <property type="entry name" value="Edc3_linker"/>
    <property type="match status" value="1"/>
</dbReference>
<dbReference type="Pfam" id="PF09532">
    <property type="entry name" value="FDF"/>
    <property type="match status" value="1"/>
</dbReference>
<dbReference type="Pfam" id="PF12701">
    <property type="entry name" value="LSM14"/>
    <property type="match status" value="1"/>
</dbReference>
<dbReference type="Pfam" id="PF03853">
    <property type="entry name" value="YjeF_N"/>
    <property type="match status" value="1"/>
</dbReference>
<dbReference type="SMART" id="SM01199">
    <property type="entry name" value="FDF"/>
    <property type="match status" value="1"/>
</dbReference>
<dbReference type="SMART" id="SM01271">
    <property type="entry name" value="LSM14"/>
    <property type="match status" value="1"/>
</dbReference>
<dbReference type="SUPFAM" id="SSF64153">
    <property type="entry name" value="YjeF N-terminal domain-like"/>
    <property type="match status" value="1"/>
</dbReference>
<dbReference type="PROSITE" id="PS51512">
    <property type="entry name" value="DFDF"/>
    <property type="match status" value="1"/>
</dbReference>
<dbReference type="PROSITE" id="PS52002">
    <property type="entry name" value="SM"/>
    <property type="match status" value="1"/>
</dbReference>
<dbReference type="PROSITE" id="PS51385">
    <property type="entry name" value="YJEF_N"/>
    <property type="match status" value="1"/>
</dbReference>
<comment type="function">
    <text evidence="2">Binds single-stranded RNA. Involved in the process of mRNA degradation and in the positive regulation of mRNA decapping (By similarity).</text>
</comment>
<comment type="subunit">
    <text evidence="2">Homodimer (via YjeF N-terminal domain). Forms a complex with DCP1A, DCP2, DDX6 and EDC4/HEDLS, within this complex directly interacts with DCP1A and DDX6. Interacts with ZFP36.</text>
</comment>
<comment type="subcellular location">
    <subcellularLocation>
        <location evidence="1">Cytoplasm</location>
        <location evidence="1">P-body</location>
    </subcellularLocation>
    <text evidence="1">Processing bodies (PB).</text>
</comment>
<comment type="domain">
    <text evidence="1">The DFDF domain is unstructured by itself. It assumes a helical fold upon interaction with DDX6 (By similarity).</text>
</comment>
<comment type="similarity">
    <text evidence="7">Belongs to the EDC3 family.</text>
</comment>
<proteinExistence type="evidence at transcript level"/>
<reference key="1">
    <citation type="submission" date="2005-06" db="EMBL/GenBank/DDBJ databases">
        <title>DNA sequences of macaque genes expressed in brain or testis and its evolutionary implications.</title>
        <authorList>
            <consortium name="International consortium for macaque cDNA sequencing and analysis"/>
        </authorList>
    </citation>
    <scope>NUCLEOTIDE SEQUENCE [LARGE SCALE MRNA]</scope>
    <source>
        <tissue>Testis</tissue>
    </source>
</reference>